<comment type="function">
    <text evidence="1">Located at the top of the head of the 30S subunit, it contacts several helices of the 16S rRNA. In the 70S ribosome it contacts the 23S rRNA (bridge B1a) and protein L5 of the 50S subunit (bridge B1b), connecting the 2 subunits; these bridges are implicated in subunit movement. Contacts the tRNAs in the A and P-sites.</text>
</comment>
<comment type="subunit">
    <text evidence="1">Part of the 30S ribosomal subunit. Forms a loose heterodimer with protein S19. Forms two bridges to the 50S subunit in the 70S ribosome.</text>
</comment>
<comment type="similarity">
    <text evidence="1">Belongs to the universal ribosomal protein uS13 family.</text>
</comment>
<name>RS13_BURCH</name>
<reference key="1">
    <citation type="submission" date="2006-08" db="EMBL/GenBank/DDBJ databases">
        <title>Complete sequence of chromosome 1 of Burkholderia cenocepacia HI2424.</title>
        <authorList>
            <person name="Copeland A."/>
            <person name="Lucas S."/>
            <person name="Lapidus A."/>
            <person name="Barry K."/>
            <person name="Detter J.C."/>
            <person name="Glavina del Rio T."/>
            <person name="Hammon N."/>
            <person name="Israni S."/>
            <person name="Pitluck S."/>
            <person name="Chain P."/>
            <person name="Malfatti S."/>
            <person name="Shin M."/>
            <person name="Vergez L."/>
            <person name="Schmutz J."/>
            <person name="Larimer F."/>
            <person name="Land M."/>
            <person name="Hauser L."/>
            <person name="Kyrpides N."/>
            <person name="Kim E."/>
            <person name="LiPuma J.J."/>
            <person name="Gonzalez C.F."/>
            <person name="Konstantinidis K."/>
            <person name="Tiedje J.M."/>
            <person name="Richardson P."/>
        </authorList>
    </citation>
    <scope>NUCLEOTIDE SEQUENCE [LARGE SCALE GENOMIC DNA]</scope>
    <source>
        <strain>HI2424</strain>
    </source>
</reference>
<feature type="chain" id="PRO_0000306576" description="Small ribosomal subunit protein uS13">
    <location>
        <begin position="1"/>
        <end position="121"/>
    </location>
</feature>
<feature type="region of interest" description="Disordered" evidence="2">
    <location>
        <begin position="92"/>
        <end position="121"/>
    </location>
</feature>
<protein>
    <recommendedName>
        <fullName evidence="1">Small ribosomal subunit protein uS13</fullName>
    </recommendedName>
    <alternativeName>
        <fullName evidence="3">30S ribosomal protein S13</fullName>
    </alternativeName>
</protein>
<dbReference type="EMBL" id="CP000458">
    <property type="protein sequence ID" value="ABK07125.1"/>
    <property type="molecule type" value="Genomic_DNA"/>
</dbReference>
<dbReference type="RefSeq" id="WP_006477178.1">
    <property type="nucleotide sequence ID" value="NC_008542.1"/>
</dbReference>
<dbReference type="SMR" id="A0K3P8"/>
<dbReference type="GeneID" id="93193428"/>
<dbReference type="KEGG" id="bch:Bcen2424_0371"/>
<dbReference type="HOGENOM" id="CLU_103849_1_2_4"/>
<dbReference type="GO" id="GO:0005829">
    <property type="term" value="C:cytosol"/>
    <property type="evidence" value="ECO:0007669"/>
    <property type="project" value="TreeGrafter"/>
</dbReference>
<dbReference type="GO" id="GO:0015935">
    <property type="term" value="C:small ribosomal subunit"/>
    <property type="evidence" value="ECO:0007669"/>
    <property type="project" value="TreeGrafter"/>
</dbReference>
<dbReference type="GO" id="GO:0019843">
    <property type="term" value="F:rRNA binding"/>
    <property type="evidence" value="ECO:0007669"/>
    <property type="project" value="UniProtKB-UniRule"/>
</dbReference>
<dbReference type="GO" id="GO:0003735">
    <property type="term" value="F:structural constituent of ribosome"/>
    <property type="evidence" value="ECO:0007669"/>
    <property type="project" value="InterPro"/>
</dbReference>
<dbReference type="GO" id="GO:0000049">
    <property type="term" value="F:tRNA binding"/>
    <property type="evidence" value="ECO:0007669"/>
    <property type="project" value="UniProtKB-UniRule"/>
</dbReference>
<dbReference type="GO" id="GO:0006412">
    <property type="term" value="P:translation"/>
    <property type="evidence" value="ECO:0007669"/>
    <property type="project" value="UniProtKB-UniRule"/>
</dbReference>
<dbReference type="FunFam" id="1.10.8.50:FF:000001">
    <property type="entry name" value="30S ribosomal protein S13"/>
    <property type="match status" value="1"/>
</dbReference>
<dbReference type="FunFam" id="4.10.910.10:FF:000001">
    <property type="entry name" value="30S ribosomal protein S13"/>
    <property type="match status" value="1"/>
</dbReference>
<dbReference type="Gene3D" id="1.10.8.50">
    <property type="match status" value="1"/>
</dbReference>
<dbReference type="Gene3D" id="4.10.910.10">
    <property type="entry name" value="30s ribosomal protein s13, domain 2"/>
    <property type="match status" value="1"/>
</dbReference>
<dbReference type="HAMAP" id="MF_01315">
    <property type="entry name" value="Ribosomal_uS13"/>
    <property type="match status" value="1"/>
</dbReference>
<dbReference type="InterPro" id="IPR027437">
    <property type="entry name" value="Rbsml_uS13_C"/>
</dbReference>
<dbReference type="InterPro" id="IPR001892">
    <property type="entry name" value="Ribosomal_uS13"/>
</dbReference>
<dbReference type="InterPro" id="IPR010979">
    <property type="entry name" value="Ribosomal_uS13-like_H2TH"/>
</dbReference>
<dbReference type="InterPro" id="IPR019980">
    <property type="entry name" value="Ribosomal_uS13_bac-type"/>
</dbReference>
<dbReference type="InterPro" id="IPR018269">
    <property type="entry name" value="Ribosomal_uS13_CS"/>
</dbReference>
<dbReference type="NCBIfam" id="TIGR03631">
    <property type="entry name" value="uS13_bact"/>
    <property type="match status" value="1"/>
</dbReference>
<dbReference type="PANTHER" id="PTHR10871">
    <property type="entry name" value="30S RIBOSOMAL PROTEIN S13/40S RIBOSOMAL PROTEIN S18"/>
    <property type="match status" value="1"/>
</dbReference>
<dbReference type="PANTHER" id="PTHR10871:SF1">
    <property type="entry name" value="SMALL RIBOSOMAL SUBUNIT PROTEIN US13M"/>
    <property type="match status" value="1"/>
</dbReference>
<dbReference type="Pfam" id="PF00416">
    <property type="entry name" value="Ribosomal_S13"/>
    <property type="match status" value="1"/>
</dbReference>
<dbReference type="PIRSF" id="PIRSF002134">
    <property type="entry name" value="Ribosomal_S13"/>
    <property type="match status" value="1"/>
</dbReference>
<dbReference type="SUPFAM" id="SSF46946">
    <property type="entry name" value="S13-like H2TH domain"/>
    <property type="match status" value="1"/>
</dbReference>
<dbReference type="PROSITE" id="PS00646">
    <property type="entry name" value="RIBOSOMAL_S13_1"/>
    <property type="match status" value="1"/>
</dbReference>
<dbReference type="PROSITE" id="PS50159">
    <property type="entry name" value="RIBOSOMAL_S13_2"/>
    <property type="match status" value="1"/>
</dbReference>
<proteinExistence type="inferred from homology"/>
<keyword id="KW-0687">Ribonucleoprotein</keyword>
<keyword id="KW-0689">Ribosomal protein</keyword>
<keyword id="KW-0694">RNA-binding</keyword>
<keyword id="KW-0699">rRNA-binding</keyword>
<keyword id="KW-0820">tRNA-binding</keyword>
<sequence>MARIAGVNIPNHQHTEIGLTAIFGVGRTRSRSICVAAGVDFSKKVKDLTDADLEKLREEVGKFVVEGDLRREVTMNIKRLMDLGCYRGVRHRKGLPMRGQRTRTNARTRKGPRRAAQALKK</sequence>
<organism>
    <name type="scientific">Burkholderia cenocepacia (strain HI2424)</name>
    <dbReference type="NCBI Taxonomy" id="331272"/>
    <lineage>
        <taxon>Bacteria</taxon>
        <taxon>Pseudomonadati</taxon>
        <taxon>Pseudomonadota</taxon>
        <taxon>Betaproteobacteria</taxon>
        <taxon>Burkholderiales</taxon>
        <taxon>Burkholderiaceae</taxon>
        <taxon>Burkholderia</taxon>
        <taxon>Burkholderia cepacia complex</taxon>
    </lineage>
</organism>
<accession>A0K3P8</accession>
<evidence type="ECO:0000255" key="1">
    <source>
        <dbReference type="HAMAP-Rule" id="MF_01315"/>
    </source>
</evidence>
<evidence type="ECO:0000256" key="2">
    <source>
        <dbReference type="SAM" id="MobiDB-lite"/>
    </source>
</evidence>
<evidence type="ECO:0000305" key="3"/>
<gene>
    <name evidence="1" type="primary">rpsM</name>
    <name type="ordered locus">Bcen2424_0371</name>
</gene>